<protein>
    <recommendedName>
        <fullName>CASP-like protein 2C2</fullName>
        <shortName>SbCASPL2C2</shortName>
    </recommendedName>
</protein>
<dbReference type="EMBL" id="CM000763">
    <property type="protein sequence ID" value="EES06371.1"/>
    <property type="molecule type" value="Genomic_DNA"/>
</dbReference>
<dbReference type="SMR" id="C5XW97"/>
<dbReference type="FunCoup" id="C5XW97">
    <property type="interactions" value="449"/>
</dbReference>
<dbReference type="STRING" id="4558.C5XW97"/>
<dbReference type="EnsemblPlants" id="EES06371">
    <property type="protein sequence ID" value="EES06371"/>
    <property type="gene ID" value="SORBI_3004G063000"/>
</dbReference>
<dbReference type="Gramene" id="EES06371">
    <property type="protein sequence ID" value="EES06371"/>
    <property type="gene ID" value="SORBI_3004G063000"/>
</dbReference>
<dbReference type="KEGG" id="sbi:8079392"/>
<dbReference type="eggNOG" id="ENOG502S20T">
    <property type="taxonomic scope" value="Eukaryota"/>
</dbReference>
<dbReference type="HOGENOM" id="CLU_066104_0_0_1"/>
<dbReference type="InParanoid" id="C5XW97"/>
<dbReference type="OMA" id="LARCLYM"/>
<dbReference type="OrthoDB" id="689315at2759"/>
<dbReference type="Proteomes" id="UP000000768">
    <property type="component" value="Chromosome 4"/>
</dbReference>
<dbReference type="GO" id="GO:0005886">
    <property type="term" value="C:plasma membrane"/>
    <property type="evidence" value="ECO:0007669"/>
    <property type="project" value="UniProtKB-SubCell"/>
</dbReference>
<dbReference type="InterPro" id="IPR006459">
    <property type="entry name" value="CASP/CASPL"/>
</dbReference>
<dbReference type="InterPro" id="IPR006702">
    <property type="entry name" value="CASP_dom"/>
</dbReference>
<dbReference type="NCBIfam" id="TIGR01569">
    <property type="entry name" value="A_tha_TIGR01569"/>
    <property type="match status" value="1"/>
</dbReference>
<dbReference type="PANTHER" id="PTHR33573:SF30">
    <property type="entry name" value="CASP-LIKE PROTEIN 2C1-RELATED"/>
    <property type="match status" value="1"/>
</dbReference>
<dbReference type="PANTHER" id="PTHR33573">
    <property type="entry name" value="CASP-LIKE PROTEIN 4A4"/>
    <property type="match status" value="1"/>
</dbReference>
<dbReference type="Pfam" id="PF04535">
    <property type="entry name" value="CASP_dom"/>
    <property type="match status" value="1"/>
</dbReference>
<accession>C5XW97</accession>
<reference key="1">
    <citation type="journal article" date="2009" name="Nature">
        <title>The Sorghum bicolor genome and the diversification of grasses.</title>
        <authorList>
            <person name="Paterson A.H."/>
            <person name="Bowers J.E."/>
            <person name="Bruggmann R."/>
            <person name="Dubchak I."/>
            <person name="Grimwood J."/>
            <person name="Gundlach H."/>
            <person name="Haberer G."/>
            <person name="Hellsten U."/>
            <person name="Mitros T."/>
            <person name="Poliakov A."/>
            <person name="Schmutz J."/>
            <person name="Spannagl M."/>
            <person name="Tang H."/>
            <person name="Wang X."/>
            <person name="Wicker T."/>
            <person name="Bharti A.K."/>
            <person name="Chapman J."/>
            <person name="Feltus F.A."/>
            <person name="Gowik U."/>
            <person name="Grigoriev I.V."/>
            <person name="Lyons E."/>
            <person name="Maher C.A."/>
            <person name="Martis M."/>
            <person name="Narechania A."/>
            <person name="Otillar R.P."/>
            <person name="Penning B.W."/>
            <person name="Salamov A.A."/>
            <person name="Wang Y."/>
            <person name="Zhang L."/>
            <person name="Carpita N.C."/>
            <person name="Freeling M."/>
            <person name="Gingle A.R."/>
            <person name="Hash C.T."/>
            <person name="Keller B."/>
            <person name="Klein P."/>
            <person name="Kresovich S."/>
            <person name="McCann M.C."/>
            <person name="Ming R."/>
            <person name="Peterson D.G."/>
            <person name="Mehboob-ur-Rahman M."/>
            <person name="Ware D."/>
            <person name="Westhoff P."/>
            <person name="Mayer K.F.X."/>
            <person name="Messing J."/>
            <person name="Rokhsar D.S."/>
        </authorList>
    </citation>
    <scope>NUCLEOTIDE SEQUENCE [LARGE SCALE GENOMIC DNA]</scope>
    <source>
        <strain>cv. BTx623</strain>
    </source>
</reference>
<reference key="2">
    <citation type="journal article" date="2018" name="Plant J.">
        <title>The Sorghum bicolor reference genome: improved assembly, gene annotations, a transcriptome atlas, and signatures of genome organization.</title>
        <authorList>
            <person name="McCormick R.F."/>
            <person name="Truong S.K."/>
            <person name="Sreedasyam A."/>
            <person name="Jenkins J."/>
            <person name="Shu S."/>
            <person name="Sims D."/>
            <person name="Kennedy M."/>
            <person name="Amirebrahimi M."/>
            <person name="Weers B.D."/>
            <person name="McKinley B."/>
            <person name="Mattison A."/>
            <person name="Morishige D.T."/>
            <person name="Grimwood J."/>
            <person name="Schmutz J."/>
            <person name="Mullet J.E."/>
        </authorList>
    </citation>
    <scope>GENOME REANNOTATION</scope>
    <source>
        <strain>cv. BTx623</strain>
    </source>
</reference>
<reference key="3">
    <citation type="journal article" date="2014" name="Plant Physiol.">
        <title>Functional and evolutionary analysis of the CASPARIAN STRIP MEMBRANE DOMAIN PROTEIN family.</title>
        <authorList>
            <person name="Roppolo D."/>
            <person name="Boeckmann B."/>
            <person name="Pfister A."/>
            <person name="Boutet E."/>
            <person name="Rubio M.C."/>
            <person name="Denervaud-Tendon V."/>
            <person name="Vermeer J.E."/>
            <person name="Gheyselinck J."/>
            <person name="Xenarios I."/>
            <person name="Geldner N."/>
        </authorList>
    </citation>
    <scope>GENE FAMILY</scope>
    <scope>NOMENCLATURE</scope>
</reference>
<name>CSPL9_SORBI</name>
<proteinExistence type="evidence at transcript level"/>
<comment type="subunit">
    <text evidence="1">Homodimer and heterodimers.</text>
</comment>
<comment type="subcellular location">
    <subcellularLocation>
        <location evidence="1">Cell membrane</location>
        <topology evidence="1">Multi-pass membrane protein</topology>
    </subcellularLocation>
</comment>
<comment type="similarity">
    <text evidence="3">Belongs to the Casparian strip membrane proteins (CASP) family.</text>
</comment>
<evidence type="ECO:0000250" key="1"/>
<evidence type="ECO:0000255" key="2"/>
<evidence type="ECO:0000305" key="3"/>
<organism>
    <name type="scientific">Sorghum bicolor</name>
    <name type="common">Sorghum</name>
    <name type="synonym">Sorghum vulgare</name>
    <dbReference type="NCBI Taxonomy" id="4558"/>
    <lineage>
        <taxon>Eukaryota</taxon>
        <taxon>Viridiplantae</taxon>
        <taxon>Streptophyta</taxon>
        <taxon>Embryophyta</taxon>
        <taxon>Tracheophyta</taxon>
        <taxon>Spermatophyta</taxon>
        <taxon>Magnoliopsida</taxon>
        <taxon>Liliopsida</taxon>
        <taxon>Poales</taxon>
        <taxon>Poaceae</taxon>
        <taxon>PACMAD clade</taxon>
        <taxon>Panicoideae</taxon>
        <taxon>Andropogonodae</taxon>
        <taxon>Andropogoneae</taxon>
        <taxon>Sorghinae</taxon>
        <taxon>Sorghum</taxon>
    </lineage>
</organism>
<gene>
    <name type="ordered locus">Sb04g005230</name>
</gene>
<feature type="chain" id="PRO_0000391527" description="CASP-like protein 2C2">
    <location>
        <begin position="1"/>
        <end position="194"/>
    </location>
</feature>
<feature type="topological domain" description="Cytoplasmic" evidence="2">
    <location>
        <begin position="1"/>
        <end position="27"/>
    </location>
</feature>
<feature type="transmembrane region" description="Helical" evidence="2">
    <location>
        <begin position="28"/>
        <end position="48"/>
    </location>
</feature>
<feature type="topological domain" description="Extracellular" evidence="2">
    <location>
        <begin position="49"/>
        <end position="58"/>
    </location>
</feature>
<feature type="transmembrane region" description="Helical" evidence="2">
    <location>
        <begin position="59"/>
        <end position="79"/>
    </location>
</feature>
<feature type="topological domain" description="Cytoplasmic" evidence="2">
    <location>
        <begin position="80"/>
        <end position="113"/>
    </location>
</feature>
<feature type="transmembrane region" description="Helical" evidence="2">
    <location>
        <begin position="114"/>
        <end position="134"/>
    </location>
</feature>
<feature type="topological domain" description="Extracellular" evidence="2">
    <location>
        <begin position="135"/>
        <end position="152"/>
    </location>
</feature>
<feature type="transmembrane region" description="Helical" evidence="2">
    <location>
        <begin position="153"/>
        <end position="173"/>
    </location>
</feature>
<feature type="topological domain" description="Cytoplasmic" evidence="2">
    <location>
        <begin position="174"/>
        <end position="194"/>
    </location>
</feature>
<sequence>MAAGQPRPPPPPSSVRTERVLRAACAAMAAAGALLLGFSAETKTVIFVQKKAVPKDVQALWVLIVAAAAAAAYHAAQLARCLCMDRLAGGGGGCRRLRRAVACATFLLDKGCAYMVLATTVAALQACFVGLLGVEALQWSKLCNIYTRFCEQAAAGMVCSLVAAAGMAVLSAFSARDLFRRRRPCSPCVQVQQV</sequence>
<keyword id="KW-1003">Cell membrane</keyword>
<keyword id="KW-0472">Membrane</keyword>
<keyword id="KW-1185">Reference proteome</keyword>
<keyword id="KW-0812">Transmembrane</keyword>
<keyword id="KW-1133">Transmembrane helix</keyword>